<keyword id="KW-0963">Cytoplasm</keyword>
<keyword id="KW-0396">Initiation factor</keyword>
<keyword id="KW-0648">Protein biosynthesis</keyword>
<keyword id="KW-1185">Reference proteome</keyword>
<keyword id="KW-0677">Repeat</keyword>
<keyword id="KW-0853">WD repeat</keyword>
<feature type="chain" id="PRO_0000365344" description="Eukaryotic translation initiation factor 3 subunit I">
    <location>
        <begin position="1"/>
        <end position="326"/>
    </location>
</feature>
<feature type="repeat" description="WD 1">
    <location>
        <begin position="8"/>
        <end position="47"/>
    </location>
</feature>
<feature type="repeat" description="WD 2">
    <location>
        <begin position="50"/>
        <end position="89"/>
    </location>
</feature>
<feature type="repeat" description="WD 3">
    <location>
        <begin position="145"/>
        <end position="184"/>
    </location>
</feature>
<feature type="repeat" description="WD 4">
    <location>
        <begin position="188"/>
        <end position="227"/>
    </location>
</feature>
<feature type="repeat" description="WD 5">
    <location>
        <begin position="285"/>
        <end position="326"/>
    </location>
</feature>
<evidence type="ECO:0000255" key="1">
    <source>
        <dbReference type="HAMAP-Rule" id="MF_03008"/>
    </source>
</evidence>
<gene>
    <name evidence="1" type="primary">eIF3i</name>
    <name evidence="1" type="synonym">eif3-S2</name>
    <name evidence="1" type="synonym">Trip1</name>
    <name type="ORF">GH10244</name>
</gene>
<reference key="1">
    <citation type="journal article" date="2007" name="Nature">
        <title>Evolution of genes and genomes on the Drosophila phylogeny.</title>
        <authorList>
            <consortium name="Drosophila 12 genomes consortium"/>
        </authorList>
    </citation>
    <scope>NUCLEOTIDE SEQUENCE [LARGE SCALE GENOMIC DNA]</scope>
    <source>
        <strain>Tucson 15287-2541.00</strain>
    </source>
</reference>
<name>EIF3I_DROGR</name>
<comment type="function">
    <text evidence="1">Component of the eukaryotic translation initiation factor 3 (eIF-3) complex, which is involved in protein synthesis of a specialized repertoire of mRNAs and, together with other initiation factors, stimulates binding of mRNA and methionyl-tRNAi to the 40S ribosome. The eIF-3 complex specifically targets and initiates translation of a subset of mRNAs involved in cell proliferation.</text>
</comment>
<comment type="subunit">
    <text evidence="1">Component of the eukaryotic translation initiation factor 3 (eIF-3) complex. The eIF-3 complex interacts with pix.</text>
</comment>
<comment type="subcellular location">
    <subcellularLocation>
        <location evidence="1">Cytoplasm</location>
    </subcellularLocation>
</comment>
<comment type="similarity">
    <text evidence="1">Belongs to the eIF-3 subunit I family.</text>
</comment>
<organism>
    <name type="scientific">Drosophila grimshawi</name>
    <name type="common">Hawaiian fruit fly</name>
    <name type="synonym">Idiomyia grimshawi</name>
    <dbReference type="NCBI Taxonomy" id="7222"/>
    <lineage>
        <taxon>Eukaryota</taxon>
        <taxon>Metazoa</taxon>
        <taxon>Ecdysozoa</taxon>
        <taxon>Arthropoda</taxon>
        <taxon>Hexapoda</taxon>
        <taxon>Insecta</taxon>
        <taxon>Pterygota</taxon>
        <taxon>Neoptera</taxon>
        <taxon>Endopterygota</taxon>
        <taxon>Diptera</taxon>
        <taxon>Brachycera</taxon>
        <taxon>Muscomorpha</taxon>
        <taxon>Ephydroidea</taxon>
        <taxon>Drosophilidae</taxon>
        <taxon>Drosophila</taxon>
        <taxon>Hawaiian Drosophila</taxon>
    </lineage>
</organism>
<protein>
    <recommendedName>
        <fullName evidence="1">Eukaryotic translation initiation factor 3 subunit I</fullName>
        <shortName evidence="1">eIF3i</shortName>
    </recommendedName>
    <alternativeName>
        <fullName evidence="1">Eukaryotic translation initiation factor 3 subunit 2</fullName>
    </alternativeName>
    <alternativeName>
        <fullName>TRIP-1 homolog</fullName>
    </alternativeName>
</protein>
<sequence length="326" mass="36168">MRPLMLQGHERSITQIKYNREGDLLFSSSKDQKPNVWYSLNGERLGTYDGHQGAVWCLDVDWESRKLITGAGDMTTKLWDVEYGTVIASIATKSSVRTSNFSFSGNQAAYSTDKAMGQNCELFIIDVRNADSTLSEQEPTLRIPMVESKITSMQWGPLDETIITGHDNGNIAIWDVRKGQKVVDSGVDHAAGINDMQLSKDGTMFVTASKDNTAKLFDAESLMCLKTYKTERPVNSAAISPIFDHVVLGGGQDAMEVTTTSTKAGKFDSRFFHLIYEEEFARLKGHFGPINSLAFHPDGKSYASGGEDGFVRVQSFDSTYFENIFE</sequence>
<accession>B4JB43</accession>
<proteinExistence type="inferred from homology"/>
<dbReference type="EMBL" id="CH916368">
    <property type="protein sequence ID" value="EDW03935.1"/>
    <property type="molecule type" value="Genomic_DNA"/>
</dbReference>
<dbReference type="SMR" id="B4JB43"/>
<dbReference type="FunCoup" id="B4JB43">
    <property type="interactions" value="1582"/>
</dbReference>
<dbReference type="STRING" id="7222.B4JB43"/>
<dbReference type="EnsemblMetazoa" id="FBtr0145658">
    <property type="protein sequence ID" value="FBpp0144150"/>
    <property type="gene ID" value="FBgn0117725"/>
</dbReference>
<dbReference type="EnsemblMetazoa" id="XM_001989032.3">
    <property type="protein sequence ID" value="XP_001989068.1"/>
    <property type="gene ID" value="LOC6562758"/>
</dbReference>
<dbReference type="GeneID" id="6562758"/>
<dbReference type="KEGG" id="dgr:6562758"/>
<dbReference type="CTD" id="8668"/>
<dbReference type="eggNOG" id="KOG0643">
    <property type="taxonomic scope" value="Eukaryota"/>
</dbReference>
<dbReference type="HOGENOM" id="CLU_043845_0_1_1"/>
<dbReference type="InParanoid" id="B4JB43"/>
<dbReference type="OMA" id="VWFSHNG"/>
<dbReference type="OrthoDB" id="24966at2759"/>
<dbReference type="PhylomeDB" id="B4JB43"/>
<dbReference type="ChiTaRS" id="Trip1">
    <property type="organism name" value="fly"/>
</dbReference>
<dbReference type="Proteomes" id="UP000001070">
    <property type="component" value="Unassembled WGS sequence"/>
</dbReference>
<dbReference type="GO" id="GO:0016282">
    <property type="term" value="C:eukaryotic 43S preinitiation complex"/>
    <property type="evidence" value="ECO:0007669"/>
    <property type="project" value="UniProtKB-UniRule"/>
</dbReference>
<dbReference type="GO" id="GO:0033290">
    <property type="term" value="C:eukaryotic 48S preinitiation complex"/>
    <property type="evidence" value="ECO:0007669"/>
    <property type="project" value="UniProtKB-UniRule"/>
</dbReference>
<dbReference type="GO" id="GO:0071541">
    <property type="term" value="C:eukaryotic translation initiation factor 3 complex, eIF3m"/>
    <property type="evidence" value="ECO:0007669"/>
    <property type="project" value="TreeGrafter"/>
</dbReference>
<dbReference type="GO" id="GO:0003723">
    <property type="term" value="F:RNA binding"/>
    <property type="evidence" value="ECO:0007669"/>
    <property type="project" value="TreeGrafter"/>
</dbReference>
<dbReference type="GO" id="GO:0003743">
    <property type="term" value="F:translation initiation factor activity"/>
    <property type="evidence" value="ECO:0007669"/>
    <property type="project" value="UniProtKB-UniRule"/>
</dbReference>
<dbReference type="GO" id="GO:0001732">
    <property type="term" value="P:formation of cytoplasmic translation initiation complex"/>
    <property type="evidence" value="ECO:0007669"/>
    <property type="project" value="UniProtKB-UniRule"/>
</dbReference>
<dbReference type="FunFam" id="2.130.10.10:FF:000127">
    <property type="entry name" value="Eukaryotic translation initiation factor 3 subunit I"/>
    <property type="match status" value="1"/>
</dbReference>
<dbReference type="Gene3D" id="2.130.10.10">
    <property type="entry name" value="YVTN repeat-like/Quinoprotein amine dehydrogenase"/>
    <property type="match status" value="1"/>
</dbReference>
<dbReference type="HAMAP" id="MF_03008">
    <property type="entry name" value="eIF3i"/>
    <property type="match status" value="1"/>
</dbReference>
<dbReference type="InterPro" id="IPR027525">
    <property type="entry name" value="eIF3i"/>
</dbReference>
<dbReference type="InterPro" id="IPR015943">
    <property type="entry name" value="WD40/YVTN_repeat-like_dom_sf"/>
</dbReference>
<dbReference type="InterPro" id="IPR019775">
    <property type="entry name" value="WD40_repeat_CS"/>
</dbReference>
<dbReference type="InterPro" id="IPR036322">
    <property type="entry name" value="WD40_repeat_dom_sf"/>
</dbReference>
<dbReference type="InterPro" id="IPR001680">
    <property type="entry name" value="WD40_rpt"/>
</dbReference>
<dbReference type="PANTHER" id="PTHR19877">
    <property type="entry name" value="EUKARYOTIC TRANSLATION INITIATION FACTOR 3 SUBUNIT I"/>
    <property type="match status" value="1"/>
</dbReference>
<dbReference type="PANTHER" id="PTHR19877:SF1">
    <property type="entry name" value="EUKARYOTIC TRANSLATION INITIATION FACTOR 3 SUBUNIT I"/>
    <property type="match status" value="1"/>
</dbReference>
<dbReference type="Pfam" id="PF24805">
    <property type="entry name" value="EIF3I"/>
    <property type="match status" value="1"/>
</dbReference>
<dbReference type="SMART" id="SM00320">
    <property type="entry name" value="WD40"/>
    <property type="match status" value="6"/>
</dbReference>
<dbReference type="SUPFAM" id="SSF50978">
    <property type="entry name" value="WD40 repeat-like"/>
    <property type="match status" value="1"/>
</dbReference>
<dbReference type="PROSITE" id="PS00678">
    <property type="entry name" value="WD_REPEATS_1"/>
    <property type="match status" value="2"/>
</dbReference>
<dbReference type="PROSITE" id="PS50082">
    <property type="entry name" value="WD_REPEATS_2"/>
    <property type="match status" value="5"/>
</dbReference>
<dbReference type="PROSITE" id="PS50294">
    <property type="entry name" value="WD_REPEATS_REGION"/>
    <property type="match status" value="2"/>
</dbReference>